<reference key="1">
    <citation type="journal article" date="2004" name="Nature">
        <title>Genome sequence of Silicibacter pomeroyi reveals adaptations to the marine environment.</title>
        <authorList>
            <person name="Moran M.A."/>
            <person name="Buchan A."/>
            <person name="Gonzalez J.M."/>
            <person name="Heidelberg J.F."/>
            <person name="Whitman W.B."/>
            <person name="Kiene R.P."/>
            <person name="Henriksen J.R."/>
            <person name="King G.M."/>
            <person name="Belas R."/>
            <person name="Fuqua C."/>
            <person name="Brinkac L.M."/>
            <person name="Lewis M."/>
            <person name="Johri S."/>
            <person name="Weaver B."/>
            <person name="Pai G."/>
            <person name="Eisen J.A."/>
            <person name="Rahe E."/>
            <person name="Sheldon W.M."/>
            <person name="Ye W."/>
            <person name="Miller T.R."/>
            <person name="Carlton J."/>
            <person name="Rasko D.A."/>
            <person name="Paulsen I.T."/>
            <person name="Ren Q."/>
            <person name="Daugherty S.C."/>
            <person name="DeBoy R.T."/>
            <person name="Dodson R.J."/>
            <person name="Durkin A.S."/>
            <person name="Madupu R."/>
            <person name="Nelson W.C."/>
            <person name="Sullivan S.A."/>
            <person name="Rosovitz M.J."/>
            <person name="Haft D.H."/>
            <person name="Selengut J."/>
            <person name="Ward N."/>
        </authorList>
    </citation>
    <scope>NUCLEOTIDE SEQUENCE [LARGE SCALE GENOMIC DNA]</scope>
    <source>
        <strain>ATCC 700808 / DSM 15171 / DSS-3</strain>
    </source>
</reference>
<reference key="2">
    <citation type="journal article" date="2014" name="Stand. Genomic Sci.">
        <title>An updated genome annotation for the model marine bacterium Ruegeria pomeroyi DSS-3.</title>
        <authorList>
            <person name="Rivers A.R."/>
            <person name="Smith C.B."/>
            <person name="Moran M.A."/>
        </authorList>
    </citation>
    <scope>GENOME REANNOTATION</scope>
    <source>
        <strain>ATCC 700808 / DSM 15171 / DSS-3</strain>
    </source>
</reference>
<proteinExistence type="inferred from homology"/>
<name>UREF_RUEPO</name>
<accession>Q5LSQ0</accession>
<evidence type="ECO:0000255" key="1">
    <source>
        <dbReference type="HAMAP-Rule" id="MF_01385"/>
    </source>
</evidence>
<gene>
    <name evidence="1" type="primary">ureF</name>
    <name type="ordered locus">SPO1716</name>
</gene>
<protein>
    <recommendedName>
        <fullName evidence="1">Urease accessory protein UreF</fullName>
    </recommendedName>
</protein>
<keyword id="KW-0143">Chaperone</keyword>
<keyword id="KW-0963">Cytoplasm</keyword>
<keyword id="KW-0996">Nickel insertion</keyword>
<keyword id="KW-1185">Reference proteome</keyword>
<feature type="chain" id="PRO_0000344176" description="Urease accessory protein UreF">
    <location>
        <begin position="1"/>
        <end position="217"/>
    </location>
</feature>
<dbReference type="EMBL" id="CP000031">
    <property type="protein sequence ID" value="AAV94998.1"/>
    <property type="molecule type" value="Genomic_DNA"/>
</dbReference>
<dbReference type="RefSeq" id="WP_011047451.1">
    <property type="nucleotide sequence ID" value="NC_003911.12"/>
</dbReference>
<dbReference type="SMR" id="Q5LSQ0"/>
<dbReference type="STRING" id="246200.SPO1716"/>
<dbReference type="PaxDb" id="246200-SPO1716"/>
<dbReference type="DNASU" id="3192879"/>
<dbReference type="KEGG" id="sil:SPO1716"/>
<dbReference type="eggNOG" id="COG0830">
    <property type="taxonomic scope" value="Bacteria"/>
</dbReference>
<dbReference type="HOGENOM" id="CLU_049215_2_0_5"/>
<dbReference type="OrthoDB" id="9798772at2"/>
<dbReference type="Proteomes" id="UP000001023">
    <property type="component" value="Chromosome"/>
</dbReference>
<dbReference type="GO" id="GO:0005737">
    <property type="term" value="C:cytoplasm"/>
    <property type="evidence" value="ECO:0007669"/>
    <property type="project" value="UniProtKB-SubCell"/>
</dbReference>
<dbReference type="GO" id="GO:0016151">
    <property type="term" value="F:nickel cation binding"/>
    <property type="evidence" value="ECO:0007669"/>
    <property type="project" value="UniProtKB-UniRule"/>
</dbReference>
<dbReference type="Gene3D" id="1.10.4190.10">
    <property type="entry name" value="Urease accessory protein UreF"/>
    <property type="match status" value="1"/>
</dbReference>
<dbReference type="HAMAP" id="MF_01385">
    <property type="entry name" value="UreF"/>
    <property type="match status" value="1"/>
</dbReference>
<dbReference type="InterPro" id="IPR002639">
    <property type="entry name" value="UreF"/>
</dbReference>
<dbReference type="InterPro" id="IPR038277">
    <property type="entry name" value="UreF_sf"/>
</dbReference>
<dbReference type="PANTHER" id="PTHR33620">
    <property type="entry name" value="UREASE ACCESSORY PROTEIN F"/>
    <property type="match status" value="1"/>
</dbReference>
<dbReference type="PANTHER" id="PTHR33620:SF1">
    <property type="entry name" value="UREASE ACCESSORY PROTEIN F"/>
    <property type="match status" value="1"/>
</dbReference>
<dbReference type="Pfam" id="PF01730">
    <property type="entry name" value="UreF"/>
    <property type="match status" value="1"/>
</dbReference>
<dbReference type="PIRSF" id="PIRSF009467">
    <property type="entry name" value="Ureas_acces_UreF"/>
    <property type="match status" value="1"/>
</dbReference>
<organism>
    <name type="scientific">Ruegeria pomeroyi (strain ATCC 700808 / DSM 15171 / DSS-3)</name>
    <name type="common">Silicibacter pomeroyi</name>
    <dbReference type="NCBI Taxonomy" id="246200"/>
    <lineage>
        <taxon>Bacteria</taxon>
        <taxon>Pseudomonadati</taxon>
        <taxon>Pseudomonadota</taxon>
        <taxon>Alphaproteobacteria</taxon>
        <taxon>Rhodobacterales</taxon>
        <taxon>Roseobacteraceae</taxon>
        <taxon>Ruegeria</taxon>
    </lineage>
</organism>
<comment type="function">
    <text evidence="1">Required for maturation of urease via the functional incorporation of the urease nickel metallocenter.</text>
</comment>
<comment type="subunit">
    <text evidence="1">UreD, UreF and UreG form a complex that acts as a GTP-hydrolysis-dependent molecular chaperone, activating the urease apoprotein by helping to assemble the nickel containing metallocenter of UreC. The UreE protein probably delivers the nickel.</text>
</comment>
<comment type="subcellular location">
    <subcellularLocation>
        <location evidence="1">Cytoplasm</location>
    </subcellularLocation>
</comment>
<comment type="similarity">
    <text evidence="1">Belongs to the UreF family.</text>
</comment>
<sequence length="217" mass="23419">MATPTEKQILTLAQWFSPAYPVGAFAYSHGLEWSVEAGDVVDARTAQAWITDVLQHGAGWNDCLFIGSAYRAASLQELKNINDTALAFSASSERMMETRLQGEAFCGITASVWPVDLAGLCYPVAVGRAANLVGLPLTLSGQFYLHAFMANLVTAATRLVPLGQTEGQQIIRDLTPLCQAIADTALCANLSHLTSTAFLGDIAAMKHETQYSRMFRT</sequence>